<organism>
    <name type="scientific">Helicobacter pylori (strain P12)</name>
    <dbReference type="NCBI Taxonomy" id="570508"/>
    <lineage>
        <taxon>Bacteria</taxon>
        <taxon>Pseudomonadati</taxon>
        <taxon>Campylobacterota</taxon>
        <taxon>Epsilonproteobacteria</taxon>
        <taxon>Campylobacterales</taxon>
        <taxon>Helicobacteraceae</taxon>
        <taxon>Helicobacter</taxon>
    </lineage>
</organism>
<reference key="1">
    <citation type="submission" date="2008-10" db="EMBL/GenBank/DDBJ databases">
        <title>The complete genome sequence of Helicobacter pylori strain P12.</title>
        <authorList>
            <person name="Fischer W."/>
            <person name="Windhager L."/>
            <person name="Karnholz A."/>
            <person name="Zeiller M."/>
            <person name="Zimmer R."/>
            <person name="Haas R."/>
        </authorList>
    </citation>
    <scope>NUCLEOTIDE SEQUENCE [LARGE SCALE GENOMIC DNA]</scope>
    <source>
        <strain>P12</strain>
    </source>
</reference>
<evidence type="ECO:0000255" key="1">
    <source>
        <dbReference type="HAMAP-Rule" id="MF_00131"/>
    </source>
</evidence>
<accession>B6JNB7</accession>
<dbReference type="EC" id="4.2.1.20" evidence="1"/>
<dbReference type="EMBL" id="CP001217">
    <property type="protein sequence ID" value="ACJ08395.1"/>
    <property type="molecule type" value="Genomic_DNA"/>
</dbReference>
<dbReference type="SMR" id="B6JNB7"/>
<dbReference type="KEGG" id="hpp:HPP12_1243"/>
<dbReference type="HOGENOM" id="CLU_016734_0_4_7"/>
<dbReference type="UniPathway" id="UPA00035">
    <property type="reaction ID" value="UER00044"/>
</dbReference>
<dbReference type="Proteomes" id="UP000008198">
    <property type="component" value="Chromosome"/>
</dbReference>
<dbReference type="GO" id="GO:0005829">
    <property type="term" value="C:cytosol"/>
    <property type="evidence" value="ECO:0007669"/>
    <property type="project" value="TreeGrafter"/>
</dbReference>
<dbReference type="GO" id="GO:0004834">
    <property type="term" value="F:tryptophan synthase activity"/>
    <property type="evidence" value="ECO:0007669"/>
    <property type="project" value="UniProtKB-UniRule"/>
</dbReference>
<dbReference type="CDD" id="cd04724">
    <property type="entry name" value="Tryptophan_synthase_alpha"/>
    <property type="match status" value="1"/>
</dbReference>
<dbReference type="FunFam" id="3.20.20.70:FF:000037">
    <property type="entry name" value="Tryptophan synthase alpha chain"/>
    <property type="match status" value="1"/>
</dbReference>
<dbReference type="Gene3D" id="3.20.20.70">
    <property type="entry name" value="Aldolase class I"/>
    <property type="match status" value="1"/>
</dbReference>
<dbReference type="HAMAP" id="MF_00131">
    <property type="entry name" value="Trp_synth_alpha"/>
    <property type="match status" value="1"/>
</dbReference>
<dbReference type="InterPro" id="IPR013785">
    <property type="entry name" value="Aldolase_TIM"/>
</dbReference>
<dbReference type="InterPro" id="IPR011060">
    <property type="entry name" value="RibuloseP-bd_barrel"/>
</dbReference>
<dbReference type="InterPro" id="IPR018204">
    <property type="entry name" value="Trp_synthase_alpha_AS"/>
</dbReference>
<dbReference type="InterPro" id="IPR002028">
    <property type="entry name" value="Trp_synthase_suA"/>
</dbReference>
<dbReference type="NCBIfam" id="TIGR00262">
    <property type="entry name" value="trpA"/>
    <property type="match status" value="1"/>
</dbReference>
<dbReference type="PANTHER" id="PTHR43406:SF1">
    <property type="entry name" value="TRYPTOPHAN SYNTHASE ALPHA CHAIN, CHLOROPLASTIC"/>
    <property type="match status" value="1"/>
</dbReference>
<dbReference type="PANTHER" id="PTHR43406">
    <property type="entry name" value="TRYPTOPHAN SYNTHASE, ALPHA CHAIN"/>
    <property type="match status" value="1"/>
</dbReference>
<dbReference type="Pfam" id="PF00290">
    <property type="entry name" value="Trp_syntA"/>
    <property type="match status" value="1"/>
</dbReference>
<dbReference type="SUPFAM" id="SSF51366">
    <property type="entry name" value="Ribulose-phoshate binding barrel"/>
    <property type="match status" value="1"/>
</dbReference>
<dbReference type="PROSITE" id="PS00167">
    <property type="entry name" value="TRP_SYNTHASE_ALPHA"/>
    <property type="match status" value="1"/>
</dbReference>
<name>TRPA_HELP2</name>
<comment type="function">
    <text evidence="1">The alpha subunit is responsible for the aldol cleavage of indoleglycerol phosphate to indole and glyceraldehyde 3-phosphate.</text>
</comment>
<comment type="catalytic activity">
    <reaction evidence="1">
        <text>(1S,2R)-1-C-(indol-3-yl)glycerol 3-phosphate + L-serine = D-glyceraldehyde 3-phosphate + L-tryptophan + H2O</text>
        <dbReference type="Rhea" id="RHEA:10532"/>
        <dbReference type="ChEBI" id="CHEBI:15377"/>
        <dbReference type="ChEBI" id="CHEBI:33384"/>
        <dbReference type="ChEBI" id="CHEBI:57912"/>
        <dbReference type="ChEBI" id="CHEBI:58866"/>
        <dbReference type="ChEBI" id="CHEBI:59776"/>
        <dbReference type="EC" id="4.2.1.20"/>
    </reaction>
</comment>
<comment type="pathway">
    <text evidence="1">Amino-acid biosynthesis; L-tryptophan biosynthesis; L-tryptophan from chorismate: step 5/5.</text>
</comment>
<comment type="subunit">
    <text evidence="1">Tetramer of two alpha and two beta chains.</text>
</comment>
<comment type="similarity">
    <text evidence="1">Belongs to the TrpA family.</text>
</comment>
<proteinExistence type="inferred from homology"/>
<sequence>MRYQNMFETLKKQDKMAFIPFVTLGDPNYEWSFEIIKTLITSGVSALELGFAFSDPVADGVTIQASHLRALKHASMAKNFQLLRALRDYNPHIPIGLLAYANLIFSYGVDGFYAQIKECGVDSVLIADMPLIEKELVIKSAQKHQIKQIFIASPNASVKDLEQAAMHSQGYIYTLARSGVTGASRILENDASAIIKTLKAFSPTPALLGFGISQKEHIKNAKEMGADGVICGSALVKIIEENLNNENAMLEKIKGFIGGMIF</sequence>
<protein>
    <recommendedName>
        <fullName evidence="1">Tryptophan synthase alpha chain</fullName>
        <ecNumber evidence="1">4.2.1.20</ecNumber>
    </recommendedName>
</protein>
<keyword id="KW-0028">Amino-acid biosynthesis</keyword>
<keyword id="KW-0057">Aromatic amino acid biosynthesis</keyword>
<keyword id="KW-0456">Lyase</keyword>
<keyword id="KW-0822">Tryptophan biosynthesis</keyword>
<feature type="chain" id="PRO_1000095720" description="Tryptophan synthase alpha chain">
    <location>
        <begin position="1"/>
        <end position="262"/>
    </location>
</feature>
<feature type="active site" description="Proton acceptor" evidence="1">
    <location>
        <position position="48"/>
    </location>
</feature>
<feature type="active site" description="Proton acceptor" evidence="1">
    <location>
        <position position="59"/>
    </location>
</feature>
<gene>
    <name evidence="1" type="primary">trpA</name>
    <name type="ordered locus">HPP12_1243</name>
</gene>